<sequence length="1241" mass="142745">MIENWPKKPEGSQWTDDQWKAVVANGRDILVAAAAGSGKTAVLVERIIKKIINEENPVDVDRLLVVTFTNAAAQEMKNRIGEALEKVLIDEPGSQHIRKQLSLLNKASISTIHSFCLQVIRGYYYMLDVDPRFRIANQTENELLKEEVLDDILEEEYGIEDNTIFFELVDRYTSDRSDDDLQRMILALHTESRAHPNPEKWLDKLVEAYDVEGKTIEDLVYASYLLEDVKFQLETAEQHIRKATELAMLPDGPAPRVETLQADLALLGTLSSAARESWTSVYEAMQNVSWQTLKRIKKSDYNEDVVKQVDSLRNKAKDEVKKLQEELFSRKPESFLRDFQDMHPVLEKLVQLVKVFTERFQAMKRDKGMVDFTDLEHFCLQILSEQSEEGEMKPSAVALQYRNKFAEVLVDEYQDTNFVQESIIKFVTKDSESEGNLFMVGDVKQSIYRFRLAEPGLFLGKYKRFTQEGLGGGMKIDLAKNFRSRHEVLAGTNFIFKQIMGEEVGEIDYDADAELKLGASYPEGEDVAAELLCIQQTEEEVIDGEEGAEVEKAQLEARLMAQRIKAMVDSGYEVYDRKTDSMRPVQYRDFVILLRSMPWAPQIMEELKLQGIPVYADLATGYFEATEVNIMMNVFRVIDNPMQDIPLAAVLRSPIVGLNDEELATLRAHGKKGSFYEVMSSFLKGAPLEEEKELHDKLEWFYNLLQGWREFARQQSLSDLIWKVYGETGYYDFVGGLPAGKQRQANLRVLYDRARQYEATSFRGLFRFLRFIERILERGDDMGTARALGEQEDVVRIMTIHKSKGLEFPVVFVAGLGRRFNTQDLMKRFLLHKDFGFGSQFIDPRKRIKYTTLSQLAIKRKMKMELIAEEMRVLYVALTRAKEKLILIGTVKDATKEMEKWLDAREHSEWLLPDHIRAGASCYLDWIAPSLYRHRDSEILLELGQGSVPDEIYGYDTSWKVEVVDGNTLLAPEPVQEEKQELLEALREKKAVPLESERKEEVYDRLMWKYGYEEATSHRAKQSVTEIKRNYQSEEGSDNAFIKKLRAPIRTRPRFMEKKGLTYAERGTAVHAVMQHVDLKKPITEEVIREQIAGMVNKELLTFEQAEEIAIEKVISFFDSDLGKRVLAAKSVEREVPFTMMLAAEEAYQDWQGQSGESILVQGVIDCMIEEEDGITLIDFKTDTIEGKFPGGFDQAKPILEERYKVQLSLYAKALEKSLQHPVKEKCLYFFDGNHVIKVEE</sequence>
<proteinExistence type="inferred from homology"/>
<reference key="1">
    <citation type="submission" date="2008-10" db="EMBL/GenBank/DDBJ databases">
        <title>Genome sequence of Bacillus cereus AH187.</title>
        <authorList>
            <person name="Dodson R.J."/>
            <person name="Durkin A.S."/>
            <person name="Rosovitz M.J."/>
            <person name="Rasko D.A."/>
            <person name="Kolsto A.B."/>
            <person name="Okstad O.A."/>
            <person name="Ravel J."/>
            <person name="Sutton G."/>
        </authorList>
    </citation>
    <scope>NUCLEOTIDE SEQUENCE [LARGE SCALE GENOMIC DNA]</scope>
    <source>
        <strain>AH187</strain>
    </source>
</reference>
<feature type="chain" id="PRO_0000379232" description="ATP-dependent helicase/nuclease subunit A">
    <location>
        <begin position="1"/>
        <end position="1241"/>
    </location>
</feature>
<feature type="domain" description="UvrD-like helicase ATP-binding" evidence="1">
    <location>
        <begin position="12"/>
        <end position="485"/>
    </location>
</feature>
<feature type="domain" description="UvrD-like helicase C-terminal" evidence="1">
    <location>
        <begin position="505"/>
        <end position="805"/>
    </location>
</feature>
<feature type="binding site" evidence="1">
    <location>
        <begin position="33"/>
        <end position="40"/>
    </location>
    <ligand>
        <name>ATP</name>
        <dbReference type="ChEBI" id="CHEBI:30616"/>
    </ligand>
</feature>
<accession>B7HZR5</accession>
<protein>
    <recommendedName>
        <fullName evidence="1">ATP-dependent helicase/nuclease subunit A</fullName>
        <ecNumber evidence="1">3.1.-.-</ecNumber>
        <ecNumber evidence="1">5.6.2.4</ecNumber>
    </recommendedName>
    <alternativeName>
        <fullName evidence="1">ATP-dependent helicase/nuclease AddA</fullName>
    </alternativeName>
    <alternativeName>
        <fullName evidence="1">DNA 3'-5' helicase AddA</fullName>
    </alternativeName>
</protein>
<name>ADDA_BACC7</name>
<comment type="function">
    <text evidence="1">The heterodimer acts as both an ATP-dependent DNA helicase and an ATP-dependent, dual-direction single-stranded exonuclease. Recognizes the chi site generating a DNA molecule suitable for the initiation of homologous recombination. The AddA nuclease domain is required for chi fragment generation; this subunit has the helicase and 3' -&gt; 5' nuclease activities.</text>
</comment>
<comment type="catalytic activity">
    <reaction evidence="1">
        <text>Couples ATP hydrolysis with the unwinding of duplex DNA by translocating in the 3'-5' direction.</text>
        <dbReference type="EC" id="5.6.2.4"/>
    </reaction>
</comment>
<comment type="catalytic activity">
    <reaction evidence="1">
        <text>ATP + H2O = ADP + phosphate + H(+)</text>
        <dbReference type="Rhea" id="RHEA:13065"/>
        <dbReference type="ChEBI" id="CHEBI:15377"/>
        <dbReference type="ChEBI" id="CHEBI:15378"/>
        <dbReference type="ChEBI" id="CHEBI:30616"/>
        <dbReference type="ChEBI" id="CHEBI:43474"/>
        <dbReference type="ChEBI" id="CHEBI:456216"/>
        <dbReference type="EC" id="5.6.2.4"/>
    </reaction>
</comment>
<comment type="cofactor">
    <cofactor evidence="1">
        <name>Mg(2+)</name>
        <dbReference type="ChEBI" id="CHEBI:18420"/>
    </cofactor>
</comment>
<comment type="subunit">
    <text evidence="1">Heterodimer of AddA and AddB/RexB.</text>
</comment>
<comment type="similarity">
    <text evidence="1">Belongs to the helicase family. AddA subfamily.</text>
</comment>
<evidence type="ECO:0000255" key="1">
    <source>
        <dbReference type="HAMAP-Rule" id="MF_01451"/>
    </source>
</evidence>
<organism>
    <name type="scientific">Bacillus cereus (strain AH187)</name>
    <dbReference type="NCBI Taxonomy" id="405534"/>
    <lineage>
        <taxon>Bacteria</taxon>
        <taxon>Bacillati</taxon>
        <taxon>Bacillota</taxon>
        <taxon>Bacilli</taxon>
        <taxon>Bacillales</taxon>
        <taxon>Bacillaceae</taxon>
        <taxon>Bacillus</taxon>
        <taxon>Bacillus cereus group</taxon>
    </lineage>
</organism>
<dbReference type="EC" id="3.1.-.-" evidence="1"/>
<dbReference type="EC" id="5.6.2.4" evidence="1"/>
<dbReference type="EMBL" id="CP001177">
    <property type="protein sequence ID" value="ACJ80968.1"/>
    <property type="molecule type" value="Genomic_DNA"/>
</dbReference>
<dbReference type="SMR" id="B7HZR5"/>
<dbReference type="KEGG" id="bcr:BCAH187_A1297"/>
<dbReference type="HOGENOM" id="CLU_001114_3_1_9"/>
<dbReference type="Proteomes" id="UP000002214">
    <property type="component" value="Chromosome"/>
</dbReference>
<dbReference type="GO" id="GO:0005829">
    <property type="term" value="C:cytosol"/>
    <property type="evidence" value="ECO:0007669"/>
    <property type="project" value="TreeGrafter"/>
</dbReference>
<dbReference type="GO" id="GO:0033202">
    <property type="term" value="C:DNA helicase complex"/>
    <property type="evidence" value="ECO:0007669"/>
    <property type="project" value="TreeGrafter"/>
</dbReference>
<dbReference type="GO" id="GO:0043138">
    <property type="term" value="F:3'-5' DNA helicase activity"/>
    <property type="evidence" value="ECO:0007669"/>
    <property type="project" value="UniProtKB-UniRule"/>
</dbReference>
<dbReference type="GO" id="GO:0008408">
    <property type="term" value="F:3'-5' exonuclease activity"/>
    <property type="evidence" value="ECO:0007669"/>
    <property type="project" value="UniProtKB-UniRule"/>
</dbReference>
<dbReference type="GO" id="GO:0005524">
    <property type="term" value="F:ATP binding"/>
    <property type="evidence" value="ECO:0007669"/>
    <property type="project" value="UniProtKB-UniRule"/>
</dbReference>
<dbReference type="GO" id="GO:0016887">
    <property type="term" value="F:ATP hydrolysis activity"/>
    <property type="evidence" value="ECO:0007669"/>
    <property type="project" value="RHEA"/>
</dbReference>
<dbReference type="GO" id="GO:0003690">
    <property type="term" value="F:double-stranded DNA binding"/>
    <property type="evidence" value="ECO:0007669"/>
    <property type="project" value="UniProtKB-UniRule"/>
</dbReference>
<dbReference type="GO" id="GO:0000724">
    <property type="term" value="P:double-strand break repair via homologous recombination"/>
    <property type="evidence" value="ECO:0007669"/>
    <property type="project" value="UniProtKB-UniRule"/>
</dbReference>
<dbReference type="CDD" id="cd18807">
    <property type="entry name" value="SF1_C_UvrD"/>
    <property type="match status" value="1"/>
</dbReference>
<dbReference type="FunFam" id="3.40.50.300:FF:001164">
    <property type="entry name" value="ATP-dependent helicase/nuclease subunit A"/>
    <property type="match status" value="1"/>
</dbReference>
<dbReference type="FunFam" id="3.40.50.300:FF:001187">
    <property type="entry name" value="ATP-dependent helicase/nuclease subunit A"/>
    <property type="match status" value="1"/>
</dbReference>
<dbReference type="FunFam" id="3.40.50.300:FF:001196">
    <property type="entry name" value="ATP-dependent helicase/nuclease subunit A"/>
    <property type="match status" value="1"/>
</dbReference>
<dbReference type="FunFam" id="3.40.50.300:FF:001236">
    <property type="entry name" value="ATP-dependent helicase/nuclease subunit A"/>
    <property type="match status" value="1"/>
</dbReference>
<dbReference type="Gene3D" id="3.90.320.10">
    <property type="match status" value="1"/>
</dbReference>
<dbReference type="Gene3D" id="3.40.50.300">
    <property type="entry name" value="P-loop containing nucleotide triphosphate hydrolases"/>
    <property type="match status" value="4"/>
</dbReference>
<dbReference type="HAMAP" id="MF_01451">
    <property type="entry name" value="AddA"/>
    <property type="match status" value="1"/>
</dbReference>
<dbReference type="InterPro" id="IPR014152">
    <property type="entry name" value="AddA"/>
</dbReference>
<dbReference type="InterPro" id="IPR014017">
    <property type="entry name" value="DNA_helicase_UvrD-like_C"/>
</dbReference>
<dbReference type="InterPro" id="IPR000212">
    <property type="entry name" value="DNA_helicase_UvrD/REP"/>
</dbReference>
<dbReference type="InterPro" id="IPR027417">
    <property type="entry name" value="P-loop_NTPase"/>
</dbReference>
<dbReference type="InterPro" id="IPR011604">
    <property type="entry name" value="PDDEXK-like_dom_sf"/>
</dbReference>
<dbReference type="InterPro" id="IPR038726">
    <property type="entry name" value="PDDEXK_AddAB-type"/>
</dbReference>
<dbReference type="InterPro" id="IPR011335">
    <property type="entry name" value="Restrct_endonuc-II-like"/>
</dbReference>
<dbReference type="InterPro" id="IPR014016">
    <property type="entry name" value="UvrD-like_ATP-bd"/>
</dbReference>
<dbReference type="NCBIfam" id="TIGR02785">
    <property type="entry name" value="addA_Gpos"/>
    <property type="match status" value="1"/>
</dbReference>
<dbReference type="PANTHER" id="PTHR11070:SF48">
    <property type="entry name" value="ATP-DEPENDENT HELICASE_NUCLEASE SUBUNIT A"/>
    <property type="match status" value="1"/>
</dbReference>
<dbReference type="PANTHER" id="PTHR11070">
    <property type="entry name" value="UVRD / RECB / PCRA DNA HELICASE FAMILY MEMBER"/>
    <property type="match status" value="1"/>
</dbReference>
<dbReference type="Pfam" id="PF12705">
    <property type="entry name" value="PDDEXK_1"/>
    <property type="match status" value="1"/>
</dbReference>
<dbReference type="Pfam" id="PF00580">
    <property type="entry name" value="UvrD-helicase"/>
    <property type="match status" value="1"/>
</dbReference>
<dbReference type="Pfam" id="PF13361">
    <property type="entry name" value="UvrD_C"/>
    <property type="match status" value="1"/>
</dbReference>
<dbReference type="SUPFAM" id="SSF52540">
    <property type="entry name" value="P-loop containing nucleoside triphosphate hydrolases"/>
    <property type="match status" value="1"/>
</dbReference>
<dbReference type="SUPFAM" id="SSF52980">
    <property type="entry name" value="Restriction endonuclease-like"/>
    <property type="match status" value="1"/>
</dbReference>
<dbReference type="PROSITE" id="PS51198">
    <property type="entry name" value="UVRD_HELICASE_ATP_BIND"/>
    <property type="match status" value="1"/>
</dbReference>
<dbReference type="PROSITE" id="PS51217">
    <property type="entry name" value="UVRD_HELICASE_CTER"/>
    <property type="match status" value="1"/>
</dbReference>
<gene>
    <name evidence="1" type="primary">addA</name>
    <name type="ordered locus">BCAH187_A1297</name>
</gene>
<keyword id="KW-0067">ATP-binding</keyword>
<keyword id="KW-0227">DNA damage</keyword>
<keyword id="KW-0234">DNA repair</keyword>
<keyword id="KW-0238">DNA-binding</keyword>
<keyword id="KW-0269">Exonuclease</keyword>
<keyword id="KW-0347">Helicase</keyword>
<keyword id="KW-0378">Hydrolase</keyword>
<keyword id="KW-0413">Isomerase</keyword>
<keyword id="KW-0540">Nuclease</keyword>
<keyword id="KW-0547">Nucleotide-binding</keyword>